<dbReference type="EMBL" id="CP000951">
    <property type="protein sequence ID" value="ACA99946.1"/>
    <property type="molecule type" value="Genomic_DNA"/>
</dbReference>
<dbReference type="RefSeq" id="WP_012307569.1">
    <property type="nucleotide sequence ID" value="NZ_JAHHPU010000002.1"/>
</dbReference>
<dbReference type="SMR" id="B1XQQ1"/>
<dbReference type="STRING" id="32049.SYNPCC7002_A1959"/>
<dbReference type="KEGG" id="syp:SYNPCC7002_A1959"/>
<dbReference type="eggNOG" id="COG0052">
    <property type="taxonomic scope" value="Bacteria"/>
</dbReference>
<dbReference type="HOGENOM" id="CLU_040318_1_2_3"/>
<dbReference type="Proteomes" id="UP000001688">
    <property type="component" value="Chromosome"/>
</dbReference>
<dbReference type="GO" id="GO:0022627">
    <property type="term" value="C:cytosolic small ribosomal subunit"/>
    <property type="evidence" value="ECO:0007669"/>
    <property type="project" value="TreeGrafter"/>
</dbReference>
<dbReference type="GO" id="GO:0003735">
    <property type="term" value="F:structural constituent of ribosome"/>
    <property type="evidence" value="ECO:0007669"/>
    <property type="project" value="InterPro"/>
</dbReference>
<dbReference type="GO" id="GO:0006412">
    <property type="term" value="P:translation"/>
    <property type="evidence" value="ECO:0007669"/>
    <property type="project" value="UniProtKB-UniRule"/>
</dbReference>
<dbReference type="CDD" id="cd01425">
    <property type="entry name" value="RPS2"/>
    <property type="match status" value="1"/>
</dbReference>
<dbReference type="FunFam" id="1.10.287.610:FF:000001">
    <property type="entry name" value="30S ribosomal protein S2"/>
    <property type="match status" value="1"/>
</dbReference>
<dbReference type="Gene3D" id="3.40.50.10490">
    <property type="entry name" value="Glucose-6-phosphate isomerase like protein, domain 1"/>
    <property type="match status" value="1"/>
</dbReference>
<dbReference type="Gene3D" id="1.10.287.610">
    <property type="entry name" value="Helix hairpin bin"/>
    <property type="match status" value="1"/>
</dbReference>
<dbReference type="HAMAP" id="MF_00291_B">
    <property type="entry name" value="Ribosomal_uS2_B"/>
    <property type="match status" value="1"/>
</dbReference>
<dbReference type="InterPro" id="IPR001865">
    <property type="entry name" value="Ribosomal_uS2"/>
</dbReference>
<dbReference type="InterPro" id="IPR005706">
    <property type="entry name" value="Ribosomal_uS2_bac/mit/plastid"/>
</dbReference>
<dbReference type="InterPro" id="IPR018130">
    <property type="entry name" value="Ribosomal_uS2_CS"/>
</dbReference>
<dbReference type="InterPro" id="IPR023591">
    <property type="entry name" value="Ribosomal_uS2_flav_dom_sf"/>
</dbReference>
<dbReference type="NCBIfam" id="TIGR01011">
    <property type="entry name" value="rpsB_bact"/>
    <property type="match status" value="1"/>
</dbReference>
<dbReference type="PANTHER" id="PTHR12534">
    <property type="entry name" value="30S RIBOSOMAL PROTEIN S2 PROKARYOTIC AND ORGANELLAR"/>
    <property type="match status" value="1"/>
</dbReference>
<dbReference type="PANTHER" id="PTHR12534:SF0">
    <property type="entry name" value="SMALL RIBOSOMAL SUBUNIT PROTEIN US2M"/>
    <property type="match status" value="1"/>
</dbReference>
<dbReference type="Pfam" id="PF00318">
    <property type="entry name" value="Ribosomal_S2"/>
    <property type="match status" value="1"/>
</dbReference>
<dbReference type="PRINTS" id="PR00395">
    <property type="entry name" value="RIBOSOMALS2"/>
</dbReference>
<dbReference type="SUPFAM" id="SSF52313">
    <property type="entry name" value="Ribosomal protein S2"/>
    <property type="match status" value="1"/>
</dbReference>
<dbReference type="PROSITE" id="PS00962">
    <property type="entry name" value="RIBOSOMAL_S2_1"/>
    <property type="match status" value="1"/>
</dbReference>
<dbReference type="PROSITE" id="PS00963">
    <property type="entry name" value="RIBOSOMAL_S2_2"/>
    <property type="match status" value="1"/>
</dbReference>
<gene>
    <name evidence="1" type="primary">rpsB</name>
    <name evidence="1" type="synonym">rps2</name>
    <name type="ordered locus">SYNPCC7002_A1959</name>
</gene>
<organism>
    <name type="scientific">Picosynechococcus sp. (strain ATCC 27264 / PCC 7002 / PR-6)</name>
    <name type="common">Agmenellum quadruplicatum</name>
    <dbReference type="NCBI Taxonomy" id="32049"/>
    <lineage>
        <taxon>Bacteria</taxon>
        <taxon>Bacillati</taxon>
        <taxon>Cyanobacteriota</taxon>
        <taxon>Cyanophyceae</taxon>
        <taxon>Oscillatoriophycideae</taxon>
        <taxon>Chroococcales</taxon>
        <taxon>Geminocystaceae</taxon>
        <taxon>Picosynechococcus</taxon>
    </lineage>
</organism>
<proteinExistence type="inferred from homology"/>
<sequence length="256" mass="28889">MPVVSLAELLESGVHFGHQTRRWNPRMAPYIYTSRNGVHIIDLVQTAQLVEQAYTYMKEASENGKHVLFVGTKRQAAGIIAQEAKRCGAFYINQRWLGGMLTNWETIKTRVERLKELEALEESGNLARRPKKEASMLRRELDKLQKYLGGIKNMRKIPDIVVIIDQRREHNAIQECQKLGIPIVSLLDTNCDPQTVDLPIPANDDAIRSIKLIVGKLADAIYAGRHGQPVDDNGDYGDFDEAIDEYADETDASESE</sequence>
<protein>
    <recommendedName>
        <fullName evidence="1">Small ribosomal subunit protein uS2</fullName>
    </recommendedName>
    <alternativeName>
        <fullName evidence="3">30S ribosomal protein S2</fullName>
    </alternativeName>
</protein>
<comment type="similarity">
    <text evidence="1">Belongs to the universal ribosomal protein uS2 family.</text>
</comment>
<reference key="1">
    <citation type="submission" date="2008-02" db="EMBL/GenBank/DDBJ databases">
        <title>Complete sequence of Synechococcus sp. PCC 7002.</title>
        <authorList>
            <person name="Li T."/>
            <person name="Zhao J."/>
            <person name="Zhao C."/>
            <person name="Liu Z."/>
            <person name="Zhao F."/>
            <person name="Marquardt J."/>
            <person name="Nomura C.T."/>
            <person name="Persson S."/>
            <person name="Detter J.C."/>
            <person name="Richardson P.M."/>
            <person name="Lanz C."/>
            <person name="Schuster S.C."/>
            <person name="Wang J."/>
            <person name="Li S."/>
            <person name="Huang X."/>
            <person name="Cai T."/>
            <person name="Yu Z."/>
            <person name="Luo J."/>
            <person name="Zhao J."/>
            <person name="Bryant D.A."/>
        </authorList>
    </citation>
    <scope>NUCLEOTIDE SEQUENCE [LARGE SCALE GENOMIC DNA]</scope>
    <source>
        <strain>ATCC 27264 / PCC 7002 / PR-6</strain>
    </source>
</reference>
<evidence type="ECO:0000255" key="1">
    <source>
        <dbReference type="HAMAP-Rule" id="MF_00291"/>
    </source>
</evidence>
<evidence type="ECO:0000256" key="2">
    <source>
        <dbReference type="SAM" id="MobiDB-lite"/>
    </source>
</evidence>
<evidence type="ECO:0000305" key="3"/>
<name>RS2_PICP2</name>
<feature type="chain" id="PRO_1000115066" description="Small ribosomal subunit protein uS2">
    <location>
        <begin position="1"/>
        <end position="256"/>
    </location>
</feature>
<feature type="region of interest" description="Disordered" evidence="2">
    <location>
        <begin position="229"/>
        <end position="256"/>
    </location>
</feature>
<feature type="compositionally biased region" description="Acidic residues" evidence="2">
    <location>
        <begin position="232"/>
        <end position="256"/>
    </location>
</feature>
<accession>B1XQQ1</accession>
<keyword id="KW-1185">Reference proteome</keyword>
<keyword id="KW-0687">Ribonucleoprotein</keyword>
<keyword id="KW-0689">Ribosomal protein</keyword>